<comment type="catalytic activity">
    <reaction>
        <text>L-glutamate 5-semialdehyde + NAD(+) + H2O = L-glutamate + NADH + 2 H(+)</text>
        <dbReference type="Rhea" id="RHEA:30235"/>
        <dbReference type="ChEBI" id="CHEBI:15377"/>
        <dbReference type="ChEBI" id="CHEBI:15378"/>
        <dbReference type="ChEBI" id="CHEBI:29985"/>
        <dbReference type="ChEBI" id="CHEBI:57540"/>
        <dbReference type="ChEBI" id="CHEBI:57945"/>
        <dbReference type="ChEBI" id="CHEBI:58066"/>
        <dbReference type="EC" id="1.2.1.88"/>
    </reaction>
</comment>
<comment type="pathway">
    <text>Amino-acid degradation; L-proline degradation into L-glutamate; L-glutamate from L-proline: step 2/2.</text>
</comment>
<comment type="similarity">
    <text evidence="2">Belongs to the aldehyde dehydrogenase family. RocA subfamily.</text>
</comment>
<evidence type="ECO:0000250" key="1"/>
<evidence type="ECO:0000305" key="2"/>
<evidence type="ECO:0007829" key="3">
    <source>
        <dbReference type="PDB" id="3QAN"/>
    </source>
</evidence>
<sequence>MLQPYKHEPFTDFTVEANRKAFEEALGLVEKELGKEYPLIINGERVTTEDKIQSWNPARKDQLVGSVSKANQDLAEKAIQSADEAFQTWRNVNPEERANILVKAAAIIRRRKHEFSAWLVHEAGKPWKEADADTAEAIDFLEYYARQMIELNRGKEILSRPGEQNRYFYTPMGVTVTISPWNFALAIMVGTAVAPIVTGNTVVLKPASTTPVVAAKFVEVLEDAGLPKGVINYVPGSGAEVGDYLVDHPKTSLITFTGSKDVGVRLYERAAVVRPGQNHLKRVIVEMGGKDTVVVDRDADLDLAAESILVSAFGFSGQKCSAGSRAVIHKDVYDEVLEKTVALAKNLTVGDPTNRDNYMGPVIDEKAFEKIMSYIEIGKKEGRLMTGGEGDSSTGFFIQPTIIADLDPEAVIMQEEIFGPVVAFSKANDFDHALEIANNTEYGLTGAVITRNRAHIEQAKREFHVGNLYFNRNCTGAIVGYHPFGGFKMSGTDSKAGGPDYLALHMQAKTVSEMY</sequence>
<accession>Q9K9B2</accession>
<proteinExistence type="evidence at protein level"/>
<organism>
    <name type="scientific">Halalkalibacterium halodurans (strain ATCC BAA-125 / DSM 18197 / FERM 7344 / JCM 9153 / C-125)</name>
    <name type="common">Bacillus halodurans</name>
    <dbReference type="NCBI Taxonomy" id="272558"/>
    <lineage>
        <taxon>Bacteria</taxon>
        <taxon>Bacillati</taxon>
        <taxon>Bacillota</taxon>
        <taxon>Bacilli</taxon>
        <taxon>Bacillales</taxon>
        <taxon>Bacillaceae</taxon>
        <taxon>Halalkalibacterium (ex Joshi et al. 2022)</taxon>
    </lineage>
</organism>
<reference key="1">
    <citation type="journal article" date="2000" name="Nucleic Acids Res.">
        <title>Complete genome sequence of the alkaliphilic bacterium Bacillus halodurans and genomic sequence comparison with Bacillus subtilis.</title>
        <authorList>
            <person name="Takami H."/>
            <person name="Nakasone K."/>
            <person name="Takaki Y."/>
            <person name="Maeno G."/>
            <person name="Sasaki R."/>
            <person name="Masui N."/>
            <person name="Fuji F."/>
            <person name="Hirama C."/>
            <person name="Nakamura Y."/>
            <person name="Ogasawara N."/>
            <person name="Kuhara S."/>
            <person name="Horikoshi K."/>
        </authorList>
    </citation>
    <scope>NUCLEOTIDE SEQUENCE [LARGE SCALE GENOMIC DNA]</scope>
    <source>
        <strain>ATCC BAA-125 / DSM 18197 / FERM 7344 / JCM 9153 / C-125</strain>
    </source>
</reference>
<dbReference type="EC" id="1.2.1.88"/>
<dbReference type="EMBL" id="BA000004">
    <property type="protein sequence ID" value="BAB06456.1"/>
    <property type="molecule type" value="Genomic_DNA"/>
</dbReference>
<dbReference type="PIR" id="A83992">
    <property type="entry name" value="A83992"/>
</dbReference>
<dbReference type="RefSeq" id="WP_010898885.1">
    <property type="nucleotide sequence ID" value="NC_002570.2"/>
</dbReference>
<dbReference type="PDB" id="3QAN">
    <property type="method" value="X-ray"/>
    <property type="resolution" value="1.95 A"/>
    <property type="chains" value="A/B/C=1-515"/>
</dbReference>
<dbReference type="PDBsum" id="3QAN"/>
<dbReference type="SMR" id="Q9K9B2"/>
<dbReference type="STRING" id="272558.gene:10728636"/>
<dbReference type="KEGG" id="bha:BH2737"/>
<dbReference type="eggNOG" id="COG1012">
    <property type="taxonomic scope" value="Bacteria"/>
</dbReference>
<dbReference type="HOGENOM" id="CLU_005391_0_0_9"/>
<dbReference type="OrthoDB" id="9762913at2"/>
<dbReference type="BRENDA" id="1.2.1.88">
    <property type="organism ID" value="661"/>
</dbReference>
<dbReference type="UniPathway" id="UPA00261">
    <property type="reaction ID" value="UER00374"/>
</dbReference>
<dbReference type="EvolutionaryTrace" id="Q9K9B2"/>
<dbReference type="Proteomes" id="UP000001258">
    <property type="component" value="Chromosome"/>
</dbReference>
<dbReference type="GO" id="GO:0009898">
    <property type="term" value="C:cytoplasmic side of plasma membrane"/>
    <property type="evidence" value="ECO:0007669"/>
    <property type="project" value="TreeGrafter"/>
</dbReference>
<dbReference type="GO" id="GO:0003842">
    <property type="term" value="F:1-pyrroline-5-carboxylate dehydrogenase activity"/>
    <property type="evidence" value="ECO:0007669"/>
    <property type="project" value="UniProtKB-UniRule"/>
</dbReference>
<dbReference type="GO" id="GO:0006537">
    <property type="term" value="P:glutamate biosynthetic process"/>
    <property type="evidence" value="ECO:0007669"/>
    <property type="project" value="UniProtKB-UniRule"/>
</dbReference>
<dbReference type="GO" id="GO:0010133">
    <property type="term" value="P:proline catabolic process to glutamate"/>
    <property type="evidence" value="ECO:0007669"/>
    <property type="project" value="UniProtKB-UniPathway"/>
</dbReference>
<dbReference type="CDD" id="cd07124">
    <property type="entry name" value="ALDH_PutA-P5CDH-RocA"/>
    <property type="match status" value="1"/>
</dbReference>
<dbReference type="FunFam" id="3.40.309.10:FF:000005">
    <property type="entry name" value="1-pyrroline-5-carboxylate dehydrogenase 1"/>
    <property type="match status" value="1"/>
</dbReference>
<dbReference type="FunFam" id="3.40.605.10:FF:000045">
    <property type="entry name" value="1-pyrroline-5-carboxylate dehydrogenase 1"/>
    <property type="match status" value="1"/>
</dbReference>
<dbReference type="Gene3D" id="3.40.605.10">
    <property type="entry name" value="Aldehyde Dehydrogenase, Chain A, domain 1"/>
    <property type="match status" value="1"/>
</dbReference>
<dbReference type="Gene3D" id="3.40.309.10">
    <property type="entry name" value="Aldehyde Dehydrogenase, Chain A, domain 2"/>
    <property type="match status" value="1"/>
</dbReference>
<dbReference type="HAMAP" id="MF_00733">
    <property type="entry name" value="RocA"/>
    <property type="match status" value="1"/>
</dbReference>
<dbReference type="InterPro" id="IPR016161">
    <property type="entry name" value="Ald_DH/histidinol_DH"/>
</dbReference>
<dbReference type="InterPro" id="IPR016163">
    <property type="entry name" value="Ald_DH_C"/>
</dbReference>
<dbReference type="InterPro" id="IPR016160">
    <property type="entry name" value="Ald_DH_CS_CYS"/>
</dbReference>
<dbReference type="InterPro" id="IPR029510">
    <property type="entry name" value="Ald_DH_CS_GLU"/>
</dbReference>
<dbReference type="InterPro" id="IPR016162">
    <property type="entry name" value="Ald_DH_N"/>
</dbReference>
<dbReference type="InterPro" id="IPR015590">
    <property type="entry name" value="Aldehyde_DH_dom"/>
</dbReference>
<dbReference type="InterPro" id="IPR050485">
    <property type="entry name" value="Proline_metab_enzyme"/>
</dbReference>
<dbReference type="InterPro" id="IPR005932">
    <property type="entry name" value="RocA"/>
</dbReference>
<dbReference type="InterPro" id="IPR047597">
    <property type="entry name" value="RocA_bacillales"/>
</dbReference>
<dbReference type="NCBIfam" id="TIGR01237">
    <property type="entry name" value="D1pyr5carbox2"/>
    <property type="match status" value="1"/>
</dbReference>
<dbReference type="NCBIfam" id="NF002852">
    <property type="entry name" value="PRK03137.1"/>
    <property type="match status" value="1"/>
</dbReference>
<dbReference type="PANTHER" id="PTHR42862">
    <property type="entry name" value="DELTA-1-PYRROLINE-5-CARBOXYLATE DEHYDROGENASE 1, ISOFORM A-RELATED"/>
    <property type="match status" value="1"/>
</dbReference>
<dbReference type="PANTHER" id="PTHR42862:SF1">
    <property type="entry name" value="DELTA-1-PYRROLINE-5-CARBOXYLATE DEHYDROGENASE 2, ISOFORM A-RELATED"/>
    <property type="match status" value="1"/>
</dbReference>
<dbReference type="Pfam" id="PF00171">
    <property type="entry name" value="Aldedh"/>
    <property type="match status" value="1"/>
</dbReference>
<dbReference type="SUPFAM" id="SSF53720">
    <property type="entry name" value="ALDH-like"/>
    <property type="match status" value="1"/>
</dbReference>
<dbReference type="PROSITE" id="PS00070">
    <property type="entry name" value="ALDEHYDE_DEHYDR_CYS"/>
    <property type="match status" value="1"/>
</dbReference>
<dbReference type="PROSITE" id="PS00687">
    <property type="entry name" value="ALDEHYDE_DEHYDR_GLU"/>
    <property type="match status" value="1"/>
</dbReference>
<protein>
    <recommendedName>
        <fullName>1-pyrroline-5-carboxylate dehydrogenase 1</fullName>
        <shortName>P5C dehydrogenase 1</shortName>
        <ecNumber>1.2.1.88</ecNumber>
    </recommendedName>
    <alternativeName>
        <fullName>L-glutamate gamma-semialdehyde dehydrogenase</fullName>
    </alternativeName>
</protein>
<keyword id="KW-0002">3D-structure</keyword>
<keyword id="KW-0520">NAD</keyword>
<keyword id="KW-0560">Oxidoreductase</keyword>
<keyword id="KW-1185">Reference proteome</keyword>
<name>ROCA1_HALH5</name>
<gene>
    <name type="primary">rocA1</name>
    <name type="ordered locus">BH2737</name>
</gene>
<feature type="chain" id="PRO_0000056507" description="1-pyrroline-5-carboxylate dehydrogenase 1">
    <location>
        <begin position="1"/>
        <end position="515"/>
    </location>
</feature>
<feature type="active site" evidence="1">
    <location>
        <position position="286"/>
    </location>
</feature>
<feature type="active site" evidence="1">
    <location>
        <position position="320"/>
    </location>
</feature>
<feature type="helix" evidence="3">
    <location>
        <begin position="16"/>
        <end position="32"/>
    </location>
</feature>
<feature type="strand" evidence="3">
    <location>
        <begin position="35"/>
        <end position="37"/>
    </location>
</feature>
<feature type="strand" evidence="3">
    <location>
        <begin position="39"/>
        <end position="41"/>
    </location>
</feature>
<feature type="strand" evidence="3">
    <location>
        <begin position="44"/>
        <end position="46"/>
    </location>
</feature>
<feature type="strand" evidence="3">
    <location>
        <begin position="49"/>
        <end position="55"/>
    </location>
</feature>
<feature type="strand" evidence="3">
    <location>
        <begin position="57"/>
        <end position="59"/>
    </location>
</feature>
<feature type="strand" evidence="3">
    <location>
        <begin position="63"/>
        <end position="68"/>
    </location>
</feature>
<feature type="helix" evidence="3">
    <location>
        <begin position="72"/>
        <end position="89"/>
    </location>
</feature>
<feature type="helix" evidence="3">
    <location>
        <begin position="94"/>
        <end position="110"/>
    </location>
</feature>
<feature type="helix" evidence="3">
    <location>
        <begin position="112"/>
        <end position="122"/>
    </location>
</feature>
<feature type="helix" evidence="3">
    <location>
        <begin position="127"/>
        <end position="152"/>
    </location>
</feature>
<feature type="strand" evidence="3">
    <location>
        <begin position="163"/>
        <end position="171"/>
    </location>
</feature>
<feature type="strand" evidence="3">
    <location>
        <begin position="174"/>
        <end position="178"/>
    </location>
</feature>
<feature type="turn" evidence="3">
    <location>
        <begin position="182"/>
        <end position="185"/>
    </location>
</feature>
<feature type="helix" evidence="3">
    <location>
        <begin position="186"/>
        <end position="197"/>
    </location>
</feature>
<feature type="strand" evidence="3">
    <location>
        <begin position="201"/>
        <end position="205"/>
    </location>
</feature>
<feature type="helix" evidence="3">
    <location>
        <begin position="211"/>
        <end position="223"/>
    </location>
</feature>
<feature type="strand" evidence="3">
    <location>
        <begin position="230"/>
        <end position="233"/>
    </location>
</feature>
<feature type="turn" evidence="3">
    <location>
        <begin position="238"/>
        <end position="241"/>
    </location>
</feature>
<feature type="helix" evidence="3">
    <location>
        <begin position="242"/>
        <end position="247"/>
    </location>
</feature>
<feature type="strand" evidence="3">
    <location>
        <begin position="251"/>
        <end position="258"/>
    </location>
</feature>
<feature type="helix" evidence="3">
    <location>
        <begin position="260"/>
        <end position="270"/>
    </location>
</feature>
<feature type="strand" evidence="3">
    <location>
        <begin position="282"/>
        <end position="286"/>
    </location>
</feature>
<feature type="strand" evidence="3">
    <location>
        <begin position="292"/>
        <end position="295"/>
    </location>
</feature>
<feature type="helix" evidence="3">
    <location>
        <begin position="301"/>
        <end position="313"/>
    </location>
</feature>
<feature type="helix" evidence="3">
    <location>
        <begin position="314"/>
        <end position="317"/>
    </location>
</feature>
<feature type="strand" evidence="3">
    <location>
        <begin position="325"/>
        <end position="329"/>
    </location>
</feature>
<feature type="turn" evidence="3">
    <location>
        <begin position="330"/>
        <end position="332"/>
    </location>
</feature>
<feature type="helix" evidence="3">
    <location>
        <begin position="333"/>
        <end position="344"/>
    </location>
</feature>
<feature type="helix" evidence="3">
    <location>
        <begin position="365"/>
        <end position="381"/>
    </location>
</feature>
<feature type="strand" evidence="3">
    <location>
        <begin position="382"/>
        <end position="386"/>
    </location>
</feature>
<feature type="strand" evidence="3">
    <location>
        <begin position="393"/>
        <end position="395"/>
    </location>
</feature>
<feature type="strand" evidence="3">
    <location>
        <begin position="401"/>
        <end position="405"/>
    </location>
</feature>
<feature type="helix" evidence="3">
    <location>
        <begin position="411"/>
        <end position="414"/>
    </location>
</feature>
<feature type="strand" evidence="3">
    <location>
        <begin position="419"/>
        <end position="429"/>
    </location>
</feature>
<feature type="helix" evidence="3">
    <location>
        <begin position="430"/>
        <end position="438"/>
    </location>
</feature>
<feature type="strand" evidence="3">
    <location>
        <begin position="440"/>
        <end position="449"/>
    </location>
</feature>
<feature type="helix" evidence="3">
    <location>
        <begin position="453"/>
        <end position="462"/>
    </location>
</feature>
<feature type="strand" evidence="3">
    <location>
        <begin position="466"/>
        <end position="472"/>
    </location>
</feature>
<feature type="turn" evidence="3">
    <location>
        <begin position="479"/>
        <end position="481"/>
    </location>
</feature>
<feature type="turn" evidence="3">
    <location>
        <begin position="499"/>
        <end position="501"/>
    </location>
</feature>
<feature type="helix" evidence="3">
    <location>
        <begin position="502"/>
        <end position="505"/>
    </location>
</feature>
<feature type="strand" evidence="3">
    <location>
        <begin position="506"/>
        <end position="514"/>
    </location>
</feature>